<keyword id="KW-0067">ATP-binding</keyword>
<keyword id="KW-0317">Glutathione biosynthesis</keyword>
<keyword id="KW-0436">Ligase</keyword>
<keyword id="KW-0460">Magnesium</keyword>
<keyword id="KW-0479">Metal-binding</keyword>
<keyword id="KW-0547">Nucleotide-binding</keyword>
<keyword id="KW-1185">Reference proteome</keyword>
<feature type="chain" id="PRO_0000211264" description="Glutathione synthetase">
    <location>
        <begin position="1"/>
        <end position="474"/>
    </location>
</feature>
<feature type="binding site" evidence="1">
    <location>
        <position position="125"/>
    </location>
    <ligand>
        <name>substrate</name>
    </ligand>
</feature>
<feature type="binding site" evidence="1">
    <location>
        <position position="144"/>
    </location>
    <ligand>
        <name>ATP</name>
        <dbReference type="ChEBI" id="CHEBI:30616"/>
    </ligand>
</feature>
<feature type="binding site" evidence="1">
    <location>
        <position position="144"/>
    </location>
    <ligand>
        <name>Mg(2+)</name>
        <dbReference type="ChEBI" id="CHEBI:18420"/>
    </ligand>
</feature>
<feature type="binding site" evidence="1">
    <location>
        <position position="146"/>
    </location>
    <ligand>
        <name>Mg(2+)</name>
        <dbReference type="ChEBI" id="CHEBI:18420"/>
    </ligand>
</feature>
<feature type="binding site" evidence="1">
    <location>
        <begin position="148"/>
        <end position="151"/>
    </location>
    <ligand>
        <name>substrate</name>
    </ligand>
</feature>
<feature type="binding site" evidence="1">
    <location>
        <begin position="214"/>
        <end position="216"/>
    </location>
    <ligand>
        <name>substrate</name>
    </ligand>
</feature>
<feature type="binding site" evidence="1">
    <location>
        <position position="220"/>
    </location>
    <ligand>
        <name>substrate</name>
    </ligand>
</feature>
<feature type="binding site" evidence="1">
    <location>
        <begin position="267"/>
        <end position="270"/>
    </location>
    <ligand>
        <name>substrate</name>
    </ligand>
</feature>
<feature type="binding site" evidence="1">
    <location>
        <position position="305"/>
    </location>
    <ligand>
        <name>ATP</name>
        <dbReference type="ChEBI" id="CHEBI:30616"/>
    </ligand>
</feature>
<feature type="binding site" evidence="1">
    <location>
        <begin position="364"/>
        <end position="373"/>
    </location>
    <ligand>
        <name>ATP</name>
        <dbReference type="ChEBI" id="CHEBI:30616"/>
    </ligand>
</feature>
<feature type="binding site" evidence="1">
    <location>
        <position position="368"/>
    </location>
    <ligand>
        <name>Mg(2+)</name>
        <dbReference type="ChEBI" id="CHEBI:18420"/>
    </ligand>
</feature>
<feature type="binding site" evidence="1">
    <location>
        <position position="375"/>
    </location>
    <ligand>
        <name>ATP</name>
        <dbReference type="ChEBI" id="CHEBI:30616"/>
    </ligand>
</feature>
<feature type="binding site" evidence="1">
    <location>
        <begin position="398"/>
        <end position="401"/>
    </location>
    <ligand>
        <name>ATP</name>
        <dbReference type="ChEBI" id="CHEBI:30616"/>
    </ligand>
</feature>
<feature type="binding site" evidence="1">
    <location>
        <position position="425"/>
    </location>
    <ligand>
        <name>ATP</name>
        <dbReference type="ChEBI" id="CHEBI:30616"/>
    </ligand>
</feature>
<feature type="binding site" evidence="1">
    <location>
        <position position="450"/>
    </location>
    <ligand>
        <name>substrate</name>
    </ligand>
</feature>
<feature type="binding site" evidence="1">
    <location>
        <position position="452"/>
    </location>
    <ligand>
        <name>ATP</name>
        <dbReference type="ChEBI" id="CHEBI:30616"/>
    </ligand>
</feature>
<feature type="binding site" evidence="1">
    <location>
        <position position="458"/>
    </location>
    <ligand>
        <name>ATP</name>
        <dbReference type="ChEBI" id="CHEBI:30616"/>
    </ligand>
</feature>
<feature type="binding site" evidence="1">
    <location>
        <begin position="461"/>
        <end position="462"/>
    </location>
    <ligand>
        <name>substrate</name>
    </ligand>
</feature>
<gene>
    <name evidence="2" type="primary">gss</name>
</gene>
<evidence type="ECO:0000250" key="1"/>
<evidence type="ECO:0000250" key="2">
    <source>
        <dbReference type="UniProtKB" id="P48637"/>
    </source>
</evidence>
<evidence type="ECO:0000250" key="3">
    <source>
        <dbReference type="UniProtKB" id="P51855"/>
    </source>
</evidence>
<evidence type="ECO:0000305" key="4"/>
<accession>P35668</accession>
<name>GSHB_XENLA</name>
<comment type="function">
    <text evidence="2 3">Catalyzes the production of glutathione from gamma-glutamylcysteine and glycine in an ATP-dependent manner. Glutathione (gamma-glutamylcysteinylglycine, GSH) is the most abundant intracellular thiol in living aerobic cells and is required for numerous processes including the protection of cells against oxidative damage, amino acid transport, the detoxification of foreign compounds, the maintenance of protein sulfhydryl groups in a reduced state and acts as a cofactor for a number of enzymes. Participates in ophthalmate biosynthesis in hepatocytes (By similarity).</text>
</comment>
<comment type="catalytic activity">
    <reaction evidence="2">
        <text>gamma-L-glutamyl-L-cysteine + glycine + ATP = glutathione + ADP + phosphate + H(+)</text>
        <dbReference type="Rhea" id="RHEA:13557"/>
        <dbReference type="ChEBI" id="CHEBI:15378"/>
        <dbReference type="ChEBI" id="CHEBI:30616"/>
        <dbReference type="ChEBI" id="CHEBI:43474"/>
        <dbReference type="ChEBI" id="CHEBI:57305"/>
        <dbReference type="ChEBI" id="CHEBI:57925"/>
        <dbReference type="ChEBI" id="CHEBI:58173"/>
        <dbReference type="ChEBI" id="CHEBI:456216"/>
        <dbReference type="EC" id="6.3.2.3"/>
    </reaction>
    <physiologicalReaction direction="left-to-right" evidence="2">
        <dbReference type="Rhea" id="RHEA:13558"/>
    </physiologicalReaction>
</comment>
<comment type="catalytic activity">
    <reaction evidence="3">
        <text>gamma-L-glutamyl-(2S)-2-aminobutanoate + glycine + ATP = ophthalmate + ADP + phosphate + H(+)</text>
        <dbReference type="Rhea" id="RHEA:72075"/>
        <dbReference type="ChEBI" id="CHEBI:15378"/>
        <dbReference type="ChEBI" id="CHEBI:30616"/>
        <dbReference type="ChEBI" id="CHEBI:43474"/>
        <dbReference type="ChEBI" id="CHEBI:57305"/>
        <dbReference type="ChEBI" id="CHEBI:189406"/>
        <dbReference type="ChEBI" id="CHEBI:189750"/>
        <dbReference type="ChEBI" id="CHEBI:456216"/>
    </reaction>
    <physiologicalReaction direction="left-to-right" evidence="3">
        <dbReference type="Rhea" id="RHEA:72076"/>
    </physiologicalReaction>
</comment>
<comment type="cofactor">
    <cofactor evidence="2">
        <name>Mg(2+)</name>
        <dbReference type="ChEBI" id="CHEBI:18420"/>
    </cofactor>
    <text evidence="2">Binds 1 Mg(2+) ion per subunit.</text>
</comment>
<comment type="pathway">
    <text evidence="2">Sulfur metabolism; glutathione biosynthesis; glutathione from L-cysteine and L-glutamate: step 2/2.</text>
</comment>
<comment type="subunit">
    <text evidence="2">Homodimer.</text>
</comment>
<comment type="tissue specificity">
    <text>Expressed ubiquitously.</text>
</comment>
<comment type="similarity">
    <text evidence="4">Belongs to the eukaryotic GSH synthase family.</text>
</comment>
<protein>
    <recommendedName>
        <fullName evidence="2">Glutathione synthetase</fullName>
        <shortName>GSH synthetase</shortName>
        <shortName>GSH-S</shortName>
        <ecNumber evidence="2">6.3.2.3</ecNumber>
    </recommendedName>
    <alternativeName>
        <fullName>Glutathione synthase</fullName>
    </alternativeName>
</protein>
<reference key="1">
    <citation type="journal article" date="1993" name="Biochim. Biophys. Acta">
        <title>Molecular cloning of the large subunit of glutathione synthetase from Xenopus laevis embryos.</title>
        <authorList>
            <person name="Habenicht A."/>
            <person name="Hille S."/>
            <person name="Knoechel W."/>
        </authorList>
    </citation>
    <scope>NUCLEOTIDE SEQUENCE [MRNA]</scope>
</reference>
<sequence length="474" mass="53584">MADLWDDIYNDTKLLEELAPIAIDAALLQGVLMRTKESPNSSDVVSFAPFALLPSPVPKALFEQAKCVQEDFNTLVDRISQDTSFLEQVLSSTIKVDDFIRRLFAIHKQVQQEDCTQEVFLGINRSDYMFDCRDDGTPALKQIEINTIAASFGGLASRTPAVHQHVLKFLRKSEESSSILTNDAVEGIGWGIAHAWALYGSVDATVMFLVENEQRNILDQRFIEAELCKRNVRVIRRRLADVFERGTLDEERHLFIDGYEVAVAYFRTGYVPQDYTEQDWEARLMLERSRAVKCPDVPTQLVGTKKVQQELSRPQILEKFLPDKPEAVARIRETFTGLYSLDIGEEGDEAVRVALANPDQFVLKPQREGGGNNLYGEELKEKLQECKDSEERTSYILMDKINPKPLKNCLLRAGGRVQISECISELGMFGVYVRHRDQMIYYDQVGHLLRTKAIEHSDGGVAAGVAVLDNPYLV</sequence>
<dbReference type="EC" id="6.3.2.3" evidence="2"/>
<dbReference type="EMBL" id="X69662">
    <property type="protein sequence ID" value="CAA49351.1"/>
    <property type="molecule type" value="mRNA"/>
</dbReference>
<dbReference type="PIR" id="S38333">
    <property type="entry name" value="S38333"/>
</dbReference>
<dbReference type="RefSeq" id="NP_001081013.1">
    <property type="nucleotide sequence ID" value="NM_001087544.1"/>
</dbReference>
<dbReference type="SMR" id="P35668"/>
<dbReference type="DNASU" id="394329"/>
<dbReference type="GeneID" id="394329"/>
<dbReference type="KEGG" id="xla:394329"/>
<dbReference type="AGR" id="Xenbase:XB-GENE-6254454"/>
<dbReference type="CTD" id="394329"/>
<dbReference type="Xenbase" id="XB-GENE-6254454">
    <property type="gene designation" value="gss.L"/>
</dbReference>
<dbReference type="OrthoDB" id="2020073at2759"/>
<dbReference type="UniPathway" id="UPA00142">
    <property type="reaction ID" value="UER00210"/>
</dbReference>
<dbReference type="Proteomes" id="UP000186698">
    <property type="component" value="Chromosome 9_10L"/>
</dbReference>
<dbReference type="Bgee" id="394329">
    <property type="expression patterns" value="Expressed in muscle tissue and 19 other cell types or tissues"/>
</dbReference>
<dbReference type="GO" id="GO:0005829">
    <property type="term" value="C:cytosol"/>
    <property type="evidence" value="ECO:0000318"/>
    <property type="project" value="GO_Central"/>
</dbReference>
<dbReference type="GO" id="GO:0005524">
    <property type="term" value="F:ATP binding"/>
    <property type="evidence" value="ECO:0000250"/>
    <property type="project" value="UniProtKB"/>
</dbReference>
<dbReference type="GO" id="GO:0043295">
    <property type="term" value="F:glutathione binding"/>
    <property type="evidence" value="ECO:0000250"/>
    <property type="project" value="UniProtKB"/>
</dbReference>
<dbReference type="GO" id="GO:0004363">
    <property type="term" value="F:glutathione synthase activity"/>
    <property type="evidence" value="ECO:0000318"/>
    <property type="project" value="GO_Central"/>
</dbReference>
<dbReference type="GO" id="GO:0000287">
    <property type="term" value="F:magnesium ion binding"/>
    <property type="evidence" value="ECO:0000250"/>
    <property type="project" value="UniProtKB"/>
</dbReference>
<dbReference type="GO" id="GO:0042803">
    <property type="term" value="F:protein homodimerization activity"/>
    <property type="evidence" value="ECO:0000250"/>
    <property type="project" value="UniProtKB"/>
</dbReference>
<dbReference type="CDD" id="cd00228">
    <property type="entry name" value="eu-GS"/>
    <property type="match status" value="1"/>
</dbReference>
<dbReference type="FunFam" id="3.30.1490.50:FF:000001">
    <property type="entry name" value="Glutathione synthetase"/>
    <property type="match status" value="1"/>
</dbReference>
<dbReference type="FunFam" id="3.40.50.1760:FF:000001">
    <property type="entry name" value="Glutathione synthetase"/>
    <property type="match status" value="1"/>
</dbReference>
<dbReference type="Gene3D" id="3.30.1490.50">
    <property type="match status" value="1"/>
</dbReference>
<dbReference type="Gene3D" id="3.30.1490.80">
    <property type="match status" value="1"/>
</dbReference>
<dbReference type="Gene3D" id="3.30.470.20">
    <property type="entry name" value="ATP-grasp fold, B domain"/>
    <property type="match status" value="1"/>
</dbReference>
<dbReference type="Gene3D" id="3.40.50.1760">
    <property type="entry name" value="Glutathione synthase, substrate-binding domain superfamily, eukaryotic"/>
    <property type="match status" value="1"/>
</dbReference>
<dbReference type="Gene3D" id="1.10.1080.10">
    <property type="entry name" value="Glutathione Synthetase, Chain A, domain 3"/>
    <property type="match status" value="1"/>
</dbReference>
<dbReference type="InterPro" id="IPR005615">
    <property type="entry name" value="Glutathione_synthase"/>
</dbReference>
<dbReference type="InterPro" id="IPR014042">
    <property type="entry name" value="Glutathione_synthase_a-hlx"/>
</dbReference>
<dbReference type="InterPro" id="IPR014709">
    <property type="entry name" value="Glutathione_synthase_C_euk"/>
</dbReference>
<dbReference type="InterPro" id="IPR014049">
    <property type="entry name" value="Glutathione_synthase_N_euk"/>
</dbReference>
<dbReference type="InterPro" id="IPR037013">
    <property type="entry name" value="GSH-S_sub-bd_sf"/>
</dbReference>
<dbReference type="InterPro" id="IPR004887">
    <property type="entry name" value="GSH_synth_subst-bd"/>
</dbReference>
<dbReference type="InterPro" id="IPR016185">
    <property type="entry name" value="PreATP-grasp_dom_sf"/>
</dbReference>
<dbReference type="NCBIfam" id="TIGR01986">
    <property type="entry name" value="glut_syn_euk"/>
    <property type="match status" value="1"/>
</dbReference>
<dbReference type="PANTHER" id="PTHR11130">
    <property type="entry name" value="GLUTATHIONE SYNTHETASE"/>
    <property type="match status" value="1"/>
</dbReference>
<dbReference type="PANTHER" id="PTHR11130:SF0">
    <property type="entry name" value="GLUTATHIONE SYNTHETASE"/>
    <property type="match status" value="1"/>
</dbReference>
<dbReference type="Pfam" id="PF03917">
    <property type="entry name" value="GSH_synth_ATP"/>
    <property type="match status" value="1"/>
</dbReference>
<dbReference type="Pfam" id="PF03199">
    <property type="entry name" value="GSH_synthase"/>
    <property type="match status" value="1"/>
</dbReference>
<dbReference type="PIRSF" id="PIRSF001558">
    <property type="entry name" value="GSHase"/>
    <property type="match status" value="1"/>
</dbReference>
<dbReference type="SUPFAM" id="SSF56059">
    <property type="entry name" value="Glutathione synthetase ATP-binding domain-like"/>
    <property type="match status" value="1"/>
</dbReference>
<dbReference type="SUPFAM" id="SSF52440">
    <property type="entry name" value="PreATP-grasp domain"/>
    <property type="match status" value="1"/>
</dbReference>
<organism>
    <name type="scientific">Xenopus laevis</name>
    <name type="common">African clawed frog</name>
    <dbReference type="NCBI Taxonomy" id="8355"/>
    <lineage>
        <taxon>Eukaryota</taxon>
        <taxon>Metazoa</taxon>
        <taxon>Chordata</taxon>
        <taxon>Craniata</taxon>
        <taxon>Vertebrata</taxon>
        <taxon>Euteleostomi</taxon>
        <taxon>Amphibia</taxon>
        <taxon>Batrachia</taxon>
        <taxon>Anura</taxon>
        <taxon>Pipoidea</taxon>
        <taxon>Pipidae</taxon>
        <taxon>Xenopodinae</taxon>
        <taxon>Xenopus</taxon>
        <taxon>Xenopus</taxon>
    </lineage>
</organism>
<proteinExistence type="evidence at transcript level"/>